<dbReference type="EMBL" id="CR855168">
    <property type="protein sequence ID" value="CAH67056.1"/>
    <property type="molecule type" value="Genomic_DNA"/>
</dbReference>
<dbReference type="EMBL" id="CR855224">
    <property type="protein sequence ID" value="CAH67809.1"/>
    <property type="molecule type" value="Genomic_DNA"/>
</dbReference>
<dbReference type="EMBL" id="CM000129">
    <property type="protein sequence ID" value="EEC78174.1"/>
    <property type="status" value="ALT_INIT"/>
    <property type="molecule type" value="Genomic_DNA"/>
</dbReference>
<dbReference type="SMR" id="Q01I07"/>
<dbReference type="STRING" id="39946.Q01I07"/>
<dbReference type="EnsemblPlants" id="OsLiXu_04g0029690.01">
    <property type="protein sequence ID" value="OsLiXu_04g0029690.01"/>
    <property type="gene ID" value="OsLiXu_04g0029690"/>
</dbReference>
<dbReference type="EnsemblPlants" id="OsMH63_04G030110_01">
    <property type="protein sequence ID" value="OsMH63_04G030110_01"/>
    <property type="gene ID" value="OsMH63_04G030110"/>
</dbReference>
<dbReference type="EnsemblPlants" id="OsZS97_04G030230_01">
    <property type="protein sequence ID" value="OsZS97_04G030230_01"/>
    <property type="gene ID" value="OsZS97_04G030230"/>
</dbReference>
<dbReference type="Gramene" id="OsLiXu_04g0029690.01">
    <property type="protein sequence ID" value="OsLiXu_04g0029690.01"/>
    <property type="gene ID" value="OsLiXu_04g0029690"/>
</dbReference>
<dbReference type="Gramene" id="OsMH63_04G030110_01">
    <property type="protein sequence ID" value="OsMH63_04G030110_01"/>
    <property type="gene ID" value="OsMH63_04G030110"/>
</dbReference>
<dbReference type="Gramene" id="OsZS97_04G030230_01">
    <property type="protein sequence ID" value="OsZS97_04G030230_01"/>
    <property type="gene ID" value="OsZS97_04G030230"/>
</dbReference>
<dbReference type="Proteomes" id="UP000007015">
    <property type="component" value="Chromosome 4"/>
</dbReference>
<dbReference type="GO" id="GO:0009742">
    <property type="term" value="P:brassinosteroid mediated signaling pathway"/>
    <property type="evidence" value="ECO:0007669"/>
    <property type="project" value="UniProtKB-KW"/>
</dbReference>
<dbReference type="GO" id="GO:0006355">
    <property type="term" value="P:regulation of DNA-templated transcription"/>
    <property type="evidence" value="ECO:0007669"/>
    <property type="project" value="InterPro"/>
</dbReference>
<dbReference type="GO" id="GO:0009826">
    <property type="term" value="P:unidimensional cell growth"/>
    <property type="evidence" value="ECO:0007669"/>
    <property type="project" value="EnsemblPlants"/>
</dbReference>
<dbReference type="InterPro" id="IPR044660">
    <property type="entry name" value="IBH1-like"/>
</dbReference>
<dbReference type="PANTHER" id="PTHR33124:SF40">
    <property type="entry name" value="TRANSCRIPTION FACTOR IBH1"/>
    <property type="match status" value="1"/>
</dbReference>
<dbReference type="PANTHER" id="PTHR33124">
    <property type="entry name" value="TRANSCRIPTION FACTOR IBH1-LIKE 1"/>
    <property type="match status" value="1"/>
</dbReference>
<accession>Q01I07</accession>
<accession>B8AW07</accession>
<sequence length="202" mass="21657">MDAKRTPPPPTPPNPNPSVIGSGAAADGGGFGRGEAAAATKHMLAFHFLRALSRIHRATPVTRRTRTIRRAAYSSMARAASPRRAWSRALLGQARARRSRTLMRRAAVLVRRRVVAAPAPSPASARGVRIIAAGETSAAARAVPPPPRQQGEPPRADALRRLVPGGAGMEYSSLLEETADYLRSLRAQVQLMQGLVDLFSYQ</sequence>
<feature type="chain" id="PRO_0000429103" description="Transcription factor IBH1">
    <location>
        <begin position="1"/>
        <end position="202"/>
    </location>
</feature>
<feature type="domain" description="bHLH">
    <location>
        <begin position="136"/>
        <end position="185"/>
    </location>
</feature>
<feature type="region of interest" description="Disordered" evidence="2">
    <location>
        <begin position="1"/>
        <end position="33"/>
    </location>
</feature>
<feature type="compositionally biased region" description="Pro residues" evidence="2">
    <location>
        <begin position="1"/>
        <end position="16"/>
    </location>
</feature>
<name>IBH1_ORYSI</name>
<organism>
    <name type="scientific">Oryza sativa subsp. indica</name>
    <name type="common">Rice</name>
    <dbReference type="NCBI Taxonomy" id="39946"/>
    <lineage>
        <taxon>Eukaryota</taxon>
        <taxon>Viridiplantae</taxon>
        <taxon>Streptophyta</taxon>
        <taxon>Embryophyta</taxon>
        <taxon>Tracheophyta</taxon>
        <taxon>Spermatophyta</taxon>
        <taxon>Magnoliopsida</taxon>
        <taxon>Liliopsida</taxon>
        <taxon>Poales</taxon>
        <taxon>Poaceae</taxon>
        <taxon>BOP clade</taxon>
        <taxon>Oryzoideae</taxon>
        <taxon>Oryzeae</taxon>
        <taxon>Oryzinae</taxon>
        <taxon>Oryza</taxon>
        <taxon>Oryza sativa</taxon>
    </lineage>
</organism>
<gene>
    <name type="primary">IBH1</name>
    <name type="synonym">H0112G12.1</name>
    <name type="synonym">OsI_17766</name>
    <name type="synonym">OSIGBa0132E09-OSIGBa0108L24.23</name>
</gene>
<proteinExistence type="inferred from homology"/>
<comment type="function">
    <text evidence="1">Atypical and probable non DNA-binding bHLH transcription factor that acts as a negative regulator of cell elongation and plant development. Binds the transcription factor ILI1 and forms a heterodimer of antagonistic bHLH transcription factors that function downstream of BZR1 to mediate brassinosteroid regulation of cell elongation and lamina inclination (By similarity).</text>
</comment>
<comment type="subunit">
    <text evidence="1">Interacts with ILI1.</text>
</comment>
<comment type="similarity">
    <text>Belongs to the bHLH protein family.</text>
</comment>
<comment type="sequence caution" evidence="3">
    <conflict type="erroneous initiation">
        <sequence resource="EMBL-CDS" id="EEC78174"/>
    </conflict>
    <text>Truncated N-terminus.</text>
</comment>
<keyword id="KW-1070">Brassinosteroid signaling pathway</keyword>
<keyword id="KW-0341">Growth regulation</keyword>
<keyword id="KW-1185">Reference proteome</keyword>
<keyword id="KW-0804">Transcription</keyword>
<keyword id="KW-0805">Transcription regulation</keyword>
<evidence type="ECO:0000250" key="1"/>
<evidence type="ECO:0000256" key="2">
    <source>
        <dbReference type="SAM" id="MobiDB-lite"/>
    </source>
</evidence>
<evidence type="ECO:0000305" key="3"/>
<protein>
    <recommendedName>
        <fullName>Transcription factor IBH1</fullName>
        <shortName>OsIBH1</shortName>
    </recommendedName>
    <alternativeName>
        <fullName>Basic helix-loop-helix protein 175</fullName>
        <shortName>OsbHLH175</shortName>
    </alternativeName>
    <alternativeName>
        <fullName>Protein ILI1-BINDING BHLH 1</fullName>
    </alternativeName>
    <alternativeName>
        <fullName>bHLH transcription factor bHLH175</fullName>
    </alternativeName>
</protein>
<reference key="1">
    <citation type="journal article" date="2002" name="Nature">
        <title>Sequence and analysis of rice chromosome 4.</title>
        <authorList>
            <person name="Feng Q."/>
            <person name="Zhang Y."/>
            <person name="Hao P."/>
            <person name="Wang S."/>
            <person name="Fu G."/>
            <person name="Huang Y."/>
            <person name="Li Y."/>
            <person name="Zhu J."/>
            <person name="Liu Y."/>
            <person name="Hu X."/>
            <person name="Jia P."/>
            <person name="Zhang Y."/>
            <person name="Zhao Q."/>
            <person name="Ying K."/>
            <person name="Yu S."/>
            <person name="Tang Y."/>
            <person name="Weng Q."/>
            <person name="Zhang L."/>
            <person name="Lu Y."/>
            <person name="Mu J."/>
            <person name="Lu Y."/>
            <person name="Zhang L.S."/>
            <person name="Yu Z."/>
            <person name="Fan D."/>
            <person name="Liu X."/>
            <person name="Lu T."/>
            <person name="Li C."/>
            <person name="Wu Y."/>
            <person name="Sun T."/>
            <person name="Lei H."/>
            <person name="Li T."/>
            <person name="Hu H."/>
            <person name="Guan J."/>
            <person name="Wu M."/>
            <person name="Zhang R."/>
            <person name="Zhou B."/>
            <person name="Chen Z."/>
            <person name="Chen L."/>
            <person name="Jin Z."/>
            <person name="Wang R."/>
            <person name="Yin H."/>
            <person name="Cai Z."/>
            <person name="Ren S."/>
            <person name="Lv G."/>
            <person name="Gu W."/>
            <person name="Zhu G."/>
            <person name="Tu Y."/>
            <person name="Jia J."/>
            <person name="Zhang Y."/>
            <person name="Chen J."/>
            <person name="Kang H."/>
            <person name="Chen X."/>
            <person name="Shao C."/>
            <person name="Sun Y."/>
            <person name="Hu Q."/>
            <person name="Zhang X."/>
            <person name="Zhang W."/>
            <person name="Wang L."/>
            <person name="Ding C."/>
            <person name="Sheng H."/>
            <person name="Gu J."/>
            <person name="Chen S."/>
            <person name="Ni L."/>
            <person name="Zhu F."/>
            <person name="Chen W."/>
            <person name="Lan L."/>
            <person name="Lai Y."/>
            <person name="Cheng Z."/>
            <person name="Gu M."/>
            <person name="Jiang J."/>
            <person name="Li J."/>
            <person name="Hong G."/>
            <person name="Xue Y."/>
            <person name="Han B."/>
        </authorList>
    </citation>
    <scope>NUCLEOTIDE SEQUENCE [LARGE SCALE GENOMIC DNA]</scope>
    <source>
        <strain>cv. Guang-Lu-Ai No.4</strain>
    </source>
</reference>
<reference key="2">
    <citation type="journal article" date="2005" name="PLoS Biol.">
        <title>The genomes of Oryza sativa: a history of duplications.</title>
        <authorList>
            <person name="Yu J."/>
            <person name="Wang J."/>
            <person name="Lin W."/>
            <person name="Li S."/>
            <person name="Li H."/>
            <person name="Zhou J."/>
            <person name="Ni P."/>
            <person name="Dong W."/>
            <person name="Hu S."/>
            <person name="Zeng C."/>
            <person name="Zhang J."/>
            <person name="Zhang Y."/>
            <person name="Li R."/>
            <person name="Xu Z."/>
            <person name="Li S."/>
            <person name="Li X."/>
            <person name="Zheng H."/>
            <person name="Cong L."/>
            <person name="Lin L."/>
            <person name="Yin J."/>
            <person name="Geng J."/>
            <person name="Li G."/>
            <person name="Shi J."/>
            <person name="Liu J."/>
            <person name="Lv H."/>
            <person name="Li J."/>
            <person name="Wang J."/>
            <person name="Deng Y."/>
            <person name="Ran L."/>
            <person name="Shi X."/>
            <person name="Wang X."/>
            <person name="Wu Q."/>
            <person name="Li C."/>
            <person name="Ren X."/>
            <person name="Wang J."/>
            <person name="Wang X."/>
            <person name="Li D."/>
            <person name="Liu D."/>
            <person name="Zhang X."/>
            <person name="Ji Z."/>
            <person name="Zhao W."/>
            <person name="Sun Y."/>
            <person name="Zhang Z."/>
            <person name="Bao J."/>
            <person name="Han Y."/>
            <person name="Dong L."/>
            <person name="Ji J."/>
            <person name="Chen P."/>
            <person name="Wu S."/>
            <person name="Liu J."/>
            <person name="Xiao Y."/>
            <person name="Bu D."/>
            <person name="Tan J."/>
            <person name="Yang L."/>
            <person name="Ye C."/>
            <person name="Zhang J."/>
            <person name="Xu J."/>
            <person name="Zhou Y."/>
            <person name="Yu Y."/>
            <person name="Zhang B."/>
            <person name="Zhuang S."/>
            <person name="Wei H."/>
            <person name="Liu B."/>
            <person name="Lei M."/>
            <person name="Yu H."/>
            <person name="Li Y."/>
            <person name="Xu H."/>
            <person name="Wei S."/>
            <person name="He X."/>
            <person name="Fang L."/>
            <person name="Zhang Z."/>
            <person name="Zhang Y."/>
            <person name="Huang X."/>
            <person name="Su Z."/>
            <person name="Tong W."/>
            <person name="Li J."/>
            <person name="Tong Z."/>
            <person name="Li S."/>
            <person name="Ye J."/>
            <person name="Wang L."/>
            <person name="Fang L."/>
            <person name="Lei T."/>
            <person name="Chen C.-S."/>
            <person name="Chen H.-C."/>
            <person name="Xu Z."/>
            <person name="Li H."/>
            <person name="Huang H."/>
            <person name="Zhang F."/>
            <person name="Xu H."/>
            <person name="Li N."/>
            <person name="Zhao C."/>
            <person name="Li S."/>
            <person name="Dong L."/>
            <person name="Huang Y."/>
            <person name="Li L."/>
            <person name="Xi Y."/>
            <person name="Qi Q."/>
            <person name="Li W."/>
            <person name="Zhang B."/>
            <person name="Hu W."/>
            <person name="Zhang Y."/>
            <person name="Tian X."/>
            <person name="Jiao Y."/>
            <person name="Liang X."/>
            <person name="Jin J."/>
            <person name="Gao L."/>
            <person name="Zheng W."/>
            <person name="Hao B."/>
            <person name="Liu S.-M."/>
            <person name="Wang W."/>
            <person name="Yuan L."/>
            <person name="Cao M."/>
            <person name="McDermott J."/>
            <person name="Samudrala R."/>
            <person name="Wang J."/>
            <person name="Wong G.K.-S."/>
            <person name="Yang H."/>
        </authorList>
    </citation>
    <scope>NUCLEOTIDE SEQUENCE [LARGE SCALE GENOMIC DNA]</scope>
    <source>
        <strain>cv. 93-11</strain>
    </source>
</reference>